<organism>
    <name type="scientific">Bordetella pertussis (strain Tohama I / ATCC BAA-589 / NCTC 13251)</name>
    <dbReference type="NCBI Taxonomy" id="257313"/>
    <lineage>
        <taxon>Bacteria</taxon>
        <taxon>Pseudomonadati</taxon>
        <taxon>Pseudomonadota</taxon>
        <taxon>Betaproteobacteria</taxon>
        <taxon>Burkholderiales</taxon>
        <taxon>Alcaligenaceae</taxon>
        <taxon>Bordetella</taxon>
    </lineage>
</organism>
<gene>
    <name evidence="1" type="primary">pnp</name>
    <name type="ordered locus">BP0795</name>
</gene>
<accession>Q7VZU0</accession>
<protein>
    <recommendedName>
        <fullName evidence="1">Polyribonucleotide nucleotidyltransferase</fullName>
        <ecNumber evidence="1">2.7.7.8</ecNumber>
    </recommendedName>
    <alternativeName>
        <fullName evidence="1">Polynucleotide phosphorylase</fullName>
        <shortName evidence="1">PNPase</shortName>
    </alternativeName>
</protein>
<evidence type="ECO:0000255" key="1">
    <source>
        <dbReference type="HAMAP-Rule" id="MF_01595"/>
    </source>
</evidence>
<keyword id="KW-0963">Cytoplasm</keyword>
<keyword id="KW-0460">Magnesium</keyword>
<keyword id="KW-0479">Metal-binding</keyword>
<keyword id="KW-0548">Nucleotidyltransferase</keyword>
<keyword id="KW-1185">Reference proteome</keyword>
<keyword id="KW-0694">RNA-binding</keyword>
<keyword id="KW-0808">Transferase</keyword>
<reference key="1">
    <citation type="journal article" date="2003" name="Nat. Genet.">
        <title>Comparative analysis of the genome sequences of Bordetella pertussis, Bordetella parapertussis and Bordetella bronchiseptica.</title>
        <authorList>
            <person name="Parkhill J."/>
            <person name="Sebaihia M."/>
            <person name="Preston A."/>
            <person name="Murphy L.D."/>
            <person name="Thomson N.R."/>
            <person name="Harris D.E."/>
            <person name="Holden M.T.G."/>
            <person name="Churcher C.M."/>
            <person name="Bentley S.D."/>
            <person name="Mungall K.L."/>
            <person name="Cerdeno-Tarraga A.-M."/>
            <person name="Temple L."/>
            <person name="James K.D."/>
            <person name="Harris B."/>
            <person name="Quail M.A."/>
            <person name="Achtman M."/>
            <person name="Atkin R."/>
            <person name="Baker S."/>
            <person name="Basham D."/>
            <person name="Bason N."/>
            <person name="Cherevach I."/>
            <person name="Chillingworth T."/>
            <person name="Collins M."/>
            <person name="Cronin A."/>
            <person name="Davis P."/>
            <person name="Doggett J."/>
            <person name="Feltwell T."/>
            <person name="Goble A."/>
            <person name="Hamlin N."/>
            <person name="Hauser H."/>
            <person name="Holroyd S."/>
            <person name="Jagels K."/>
            <person name="Leather S."/>
            <person name="Moule S."/>
            <person name="Norberczak H."/>
            <person name="O'Neil S."/>
            <person name="Ormond D."/>
            <person name="Price C."/>
            <person name="Rabbinowitsch E."/>
            <person name="Rutter S."/>
            <person name="Sanders M."/>
            <person name="Saunders D."/>
            <person name="Seeger K."/>
            <person name="Sharp S."/>
            <person name="Simmonds M."/>
            <person name="Skelton J."/>
            <person name="Squares R."/>
            <person name="Squares S."/>
            <person name="Stevens K."/>
            <person name="Unwin L."/>
            <person name="Whitehead S."/>
            <person name="Barrell B.G."/>
            <person name="Maskell D.J."/>
        </authorList>
    </citation>
    <scope>NUCLEOTIDE SEQUENCE [LARGE SCALE GENOMIC DNA]</scope>
    <source>
        <strain>Tohama I / ATCC BAA-589 / NCTC 13251</strain>
    </source>
</reference>
<name>PNP_BORPE</name>
<dbReference type="EC" id="2.7.7.8" evidence="1"/>
<dbReference type="EMBL" id="BX640413">
    <property type="protein sequence ID" value="CAE41100.1"/>
    <property type="molecule type" value="Genomic_DNA"/>
</dbReference>
<dbReference type="RefSeq" id="NP_879610.1">
    <property type="nucleotide sequence ID" value="NC_002929.2"/>
</dbReference>
<dbReference type="RefSeq" id="WP_003821234.1">
    <property type="nucleotide sequence ID" value="NZ_CP039022.1"/>
</dbReference>
<dbReference type="SMR" id="Q7VZU0"/>
<dbReference type="STRING" id="257313.BP0795"/>
<dbReference type="PaxDb" id="257313-BP0795"/>
<dbReference type="DNASU" id="2664379"/>
<dbReference type="GeneID" id="93205216"/>
<dbReference type="KEGG" id="bpe:BP0795"/>
<dbReference type="PATRIC" id="fig|257313.5.peg.847"/>
<dbReference type="eggNOG" id="COG1185">
    <property type="taxonomic scope" value="Bacteria"/>
</dbReference>
<dbReference type="HOGENOM" id="CLU_004217_2_2_4"/>
<dbReference type="Proteomes" id="UP000002676">
    <property type="component" value="Chromosome"/>
</dbReference>
<dbReference type="GO" id="GO:0005829">
    <property type="term" value="C:cytosol"/>
    <property type="evidence" value="ECO:0007669"/>
    <property type="project" value="TreeGrafter"/>
</dbReference>
<dbReference type="GO" id="GO:0000175">
    <property type="term" value="F:3'-5'-RNA exonuclease activity"/>
    <property type="evidence" value="ECO:0007669"/>
    <property type="project" value="TreeGrafter"/>
</dbReference>
<dbReference type="GO" id="GO:0000287">
    <property type="term" value="F:magnesium ion binding"/>
    <property type="evidence" value="ECO:0007669"/>
    <property type="project" value="UniProtKB-UniRule"/>
</dbReference>
<dbReference type="GO" id="GO:0004654">
    <property type="term" value="F:polyribonucleotide nucleotidyltransferase activity"/>
    <property type="evidence" value="ECO:0007669"/>
    <property type="project" value="UniProtKB-UniRule"/>
</dbReference>
<dbReference type="GO" id="GO:0003723">
    <property type="term" value="F:RNA binding"/>
    <property type="evidence" value="ECO:0007669"/>
    <property type="project" value="UniProtKB-UniRule"/>
</dbReference>
<dbReference type="GO" id="GO:0006402">
    <property type="term" value="P:mRNA catabolic process"/>
    <property type="evidence" value="ECO:0007669"/>
    <property type="project" value="UniProtKB-UniRule"/>
</dbReference>
<dbReference type="GO" id="GO:0006396">
    <property type="term" value="P:RNA processing"/>
    <property type="evidence" value="ECO:0007669"/>
    <property type="project" value="InterPro"/>
</dbReference>
<dbReference type="CDD" id="cd02393">
    <property type="entry name" value="KH-I_PNPase"/>
    <property type="match status" value="1"/>
</dbReference>
<dbReference type="CDD" id="cd11363">
    <property type="entry name" value="RNase_PH_PNPase_1"/>
    <property type="match status" value="1"/>
</dbReference>
<dbReference type="CDD" id="cd11364">
    <property type="entry name" value="RNase_PH_PNPase_2"/>
    <property type="match status" value="1"/>
</dbReference>
<dbReference type="CDD" id="cd04472">
    <property type="entry name" value="S1_PNPase"/>
    <property type="match status" value="1"/>
</dbReference>
<dbReference type="FunFam" id="3.30.1370.10:FF:000001">
    <property type="entry name" value="Polyribonucleotide nucleotidyltransferase"/>
    <property type="match status" value="1"/>
</dbReference>
<dbReference type="FunFam" id="3.30.230.70:FF:000001">
    <property type="entry name" value="Polyribonucleotide nucleotidyltransferase"/>
    <property type="match status" value="1"/>
</dbReference>
<dbReference type="FunFam" id="3.30.230.70:FF:000002">
    <property type="entry name" value="Polyribonucleotide nucleotidyltransferase"/>
    <property type="match status" value="1"/>
</dbReference>
<dbReference type="FunFam" id="2.40.50.140:FF:000189">
    <property type="entry name" value="Polyribonucleotide nucleotidyltransferase, putative"/>
    <property type="match status" value="1"/>
</dbReference>
<dbReference type="Gene3D" id="3.30.230.70">
    <property type="entry name" value="GHMP Kinase, N-terminal domain"/>
    <property type="match status" value="2"/>
</dbReference>
<dbReference type="Gene3D" id="3.30.1370.10">
    <property type="entry name" value="K Homology domain, type 1"/>
    <property type="match status" value="1"/>
</dbReference>
<dbReference type="Gene3D" id="2.40.50.140">
    <property type="entry name" value="Nucleic acid-binding proteins"/>
    <property type="match status" value="1"/>
</dbReference>
<dbReference type="HAMAP" id="MF_01595">
    <property type="entry name" value="PNPase"/>
    <property type="match status" value="1"/>
</dbReference>
<dbReference type="InterPro" id="IPR001247">
    <property type="entry name" value="ExoRNase_PH_dom1"/>
</dbReference>
<dbReference type="InterPro" id="IPR015847">
    <property type="entry name" value="ExoRNase_PH_dom2"/>
</dbReference>
<dbReference type="InterPro" id="IPR036345">
    <property type="entry name" value="ExoRNase_PH_dom2_sf"/>
</dbReference>
<dbReference type="InterPro" id="IPR004087">
    <property type="entry name" value="KH_dom"/>
</dbReference>
<dbReference type="InterPro" id="IPR004088">
    <property type="entry name" value="KH_dom_type_1"/>
</dbReference>
<dbReference type="InterPro" id="IPR036612">
    <property type="entry name" value="KH_dom_type_1_sf"/>
</dbReference>
<dbReference type="InterPro" id="IPR012340">
    <property type="entry name" value="NA-bd_OB-fold"/>
</dbReference>
<dbReference type="InterPro" id="IPR012162">
    <property type="entry name" value="PNPase"/>
</dbReference>
<dbReference type="InterPro" id="IPR027408">
    <property type="entry name" value="PNPase/RNase_PH_dom_sf"/>
</dbReference>
<dbReference type="InterPro" id="IPR015848">
    <property type="entry name" value="PNPase_PH_RNA-bd_bac/org-type"/>
</dbReference>
<dbReference type="InterPro" id="IPR036456">
    <property type="entry name" value="PNPase_PH_RNA-bd_sf"/>
</dbReference>
<dbReference type="InterPro" id="IPR020568">
    <property type="entry name" value="Ribosomal_Su5_D2-typ_SF"/>
</dbReference>
<dbReference type="InterPro" id="IPR003029">
    <property type="entry name" value="S1_domain"/>
</dbReference>
<dbReference type="NCBIfam" id="TIGR03591">
    <property type="entry name" value="polynuc_phos"/>
    <property type="match status" value="1"/>
</dbReference>
<dbReference type="NCBIfam" id="NF008805">
    <property type="entry name" value="PRK11824.1"/>
    <property type="match status" value="1"/>
</dbReference>
<dbReference type="PANTHER" id="PTHR11252">
    <property type="entry name" value="POLYRIBONUCLEOTIDE NUCLEOTIDYLTRANSFERASE"/>
    <property type="match status" value="1"/>
</dbReference>
<dbReference type="PANTHER" id="PTHR11252:SF0">
    <property type="entry name" value="POLYRIBONUCLEOTIDE NUCLEOTIDYLTRANSFERASE 1, MITOCHONDRIAL"/>
    <property type="match status" value="1"/>
</dbReference>
<dbReference type="Pfam" id="PF00013">
    <property type="entry name" value="KH_1"/>
    <property type="match status" value="1"/>
</dbReference>
<dbReference type="Pfam" id="PF03726">
    <property type="entry name" value="PNPase"/>
    <property type="match status" value="1"/>
</dbReference>
<dbReference type="Pfam" id="PF01138">
    <property type="entry name" value="RNase_PH"/>
    <property type="match status" value="2"/>
</dbReference>
<dbReference type="Pfam" id="PF03725">
    <property type="entry name" value="RNase_PH_C"/>
    <property type="match status" value="2"/>
</dbReference>
<dbReference type="Pfam" id="PF00575">
    <property type="entry name" value="S1"/>
    <property type="match status" value="1"/>
</dbReference>
<dbReference type="PIRSF" id="PIRSF005499">
    <property type="entry name" value="PNPase"/>
    <property type="match status" value="1"/>
</dbReference>
<dbReference type="SMART" id="SM00322">
    <property type="entry name" value="KH"/>
    <property type="match status" value="1"/>
</dbReference>
<dbReference type="SMART" id="SM00316">
    <property type="entry name" value="S1"/>
    <property type="match status" value="1"/>
</dbReference>
<dbReference type="SUPFAM" id="SSF54791">
    <property type="entry name" value="Eukaryotic type KH-domain (KH-domain type I)"/>
    <property type="match status" value="1"/>
</dbReference>
<dbReference type="SUPFAM" id="SSF50249">
    <property type="entry name" value="Nucleic acid-binding proteins"/>
    <property type="match status" value="1"/>
</dbReference>
<dbReference type="SUPFAM" id="SSF46915">
    <property type="entry name" value="Polynucleotide phosphorylase/guanosine pentaphosphate synthase (PNPase/GPSI), domain 3"/>
    <property type="match status" value="1"/>
</dbReference>
<dbReference type="SUPFAM" id="SSF55666">
    <property type="entry name" value="Ribonuclease PH domain 2-like"/>
    <property type="match status" value="2"/>
</dbReference>
<dbReference type="SUPFAM" id="SSF54211">
    <property type="entry name" value="Ribosomal protein S5 domain 2-like"/>
    <property type="match status" value="2"/>
</dbReference>
<dbReference type="PROSITE" id="PS50084">
    <property type="entry name" value="KH_TYPE_1"/>
    <property type="match status" value="1"/>
</dbReference>
<dbReference type="PROSITE" id="PS50126">
    <property type="entry name" value="S1"/>
    <property type="match status" value="1"/>
</dbReference>
<comment type="function">
    <text evidence="1">Involved in mRNA degradation. Catalyzes the phosphorolysis of single-stranded polyribonucleotides processively in the 3'- to 5'-direction.</text>
</comment>
<comment type="catalytic activity">
    <reaction evidence="1">
        <text>RNA(n+1) + phosphate = RNA(n) + a ribonucleoside 5'-diphosphate</text>
        <dbReference type="Rhea" id="RHEA:22096"/>
        <dbReference type="Rhea" id="RHEA-COMP:14527"/>
        <dbReference type="Rhea" id="RHEA-COMP:17342"/>
        <dbReference type="ChEBI" id="CHEBI:43474"/>
        <dbReference type="ChEBI" id="CHEBI:57930"/>
        <dbReference type="ChEBI" id="CHEBI:140395"/>
        <dbReference type="EC" id="2.7.7.8"/>
    </reaction>
</comment>
<comment type="cofactor">
    <cofactor evidence="1">
        <name>Mg(2+)</name>
        <dbReference type="ChEBI" id="CHEBI:18420"/>
    </cofactor>
</comment>
<comment type="subcellular location">
    <subcellularLocation>
        <location evidence="1">Cytoplasm</location>
    </subcellularLocation>
</comment>
<comment type="similarity">
    <text evidence="1">Belongs to the polyribonucleotide nucleotidyltransferase family.</text>
</comment>
<proteinExistence type="inferred from homology"/>
<sequence length="719" mass="77342">MFNKVTKTFQYGQHSVVLETGEMARQASGAVLVSVEDTVVLATVVAAKKAKAGQDFFPLTVDYIEKTYAAGRIPGGFFKREGKPSEKETLTSRLIDRPLRPLFPEGFYNDVQVVIHTLSVNPDIDPDIPAMIGASAALAISGIPFNGPIGAARVGYVDGQYVLNPTATQLKSSKMDLVVAGTENAVLMVESEAKQLSEEIMLGGVVFGHEQMQAAINAIHDLVRDAGKPDWDWQPAPKNEALIAAVSAAAQEGLNAAYQIREKQARTTKLREVYAAVQAAMAEQAAQAGQPAPDSVGVDNILFDLEARIVRSQILNGEPRIDGRDTRTVRPISIRLGVLPRAHGSALFTRGETQALVVATLGTKQDEQIIDALMGEYRDRFMLHYNMPPFATGETGRIGVPKRREIGHGRLAKRALLPLLPAPEDFQYTIRLVSEITESNGSSSMASVCGGSLAMMDAGVPTNDHVAGVAMGLILDSGKFAVLTDILGDEDHLGDMDFKVAGTETGITALQMDIKIQGITKEIMQVALAQAREGRLHILGKMRDALEGSRTELSAFAPRMLTIKINPEKIRDVIGKGGATIRALTEETGTQIDISDDGTIVIASVDETQAKEAQRRIVELTADVEVGQIYDGSVLRLLDFGAIVQVLPGRDGLLHISEIANYRIANINDVLKVGQPVRVKVIEADDKGRLRLSIKAIGGIEQQQSGTAEPAAQSEPQAE</sequence>
<feature type="chain" id="PRO_0000329538" description="Polyribonucleotide nucleotidyltransferase">
    <location>
        <begin position="1"/>
        <end position="719"/>
    </location>
</feature>
<feature type="domain" description="KH" evidence="1">
    <location>
        <begin position="558"/>
        <end position="617"/>
    </location>
</feature>
<feature type="domain" description="S1 motif" evidence="1">
    <location>
        <begin position="627"/>
        <end position="695"/>
    </location>
</feature>
<feature type="binding site" evidence="1">
    <location>
        <position position="491"/>
    </location>
    <ligand>
        <name>Mg(2+)</name>
        <dbReference type="ChEBI" id="CHEBI:18420"/>
    </ligand>
</feature>
<feature type="binding site" evidence="1">
    <location>
        <position position="497"/>
    </location>
    <ligand>
        <name>Mg(2+)</name>
        <dbReference type="ChEBI" id="CHEBI:18420"/>
    </ligand>
</feature>